<name>FOLD_LEPBA</name>
<organism>
    <name type="scientific">Leptospira biflexa serovar Patoc (strain Patoc 1 / Ames)</name>
    <dbReference type="NCBI Taxonomy" id="355278"/>
    <lineage>
        <taxon>Bacteria</taxon>
        <taxon>Pseudomonadati</taxon>
        <taxon>Spirochaetota</taxon>
        <taxon>Spirochaetia</taxon>
        <taxon>Leptospirales</taxon>
        <taxon>Leptospiraceae</taxon>
        <taxon>Leptospira</taxon>
    </lineage>
</organism>
<comment type="function">
    <text evidence="1">Catalyzes the oxidation of 5,10-methylenetetrahydrofolate to 5,10-methenyltetrahydrofolate and then the hydrolysis of 5,10-methenyltetrahydrofolate to 10-formyltetrahydrofolate.</text>
</comment>
<comment type="catalytic activity">
    <reaction evidence="1">
        <text>(6R)-5,10-methylene-5,6,7,8-tetrahydrofolate + NADP(+) = (6R)-5,10-methenyltetrahydrofolate + NADPH</text>
        <dbReference type="Rhea" id="RHEA:22812"/>
        <dbReference type="ChEBI" id="CHEBI:15636"/>
        <dbReference type="ChEBI" id="CHEBI:57455"/>
        <dbReference type="ChEBI" id="CHEBI:57783"/>
        <dbReference type="ChEBI" id="CHEBI:58349"/>
        <dbReference type="EC" id="1.5.1.5"/>
    </reaction>
</comment>
<comment type="catalytic activity">
    <reaction evidence="1">
        <text>(6R)-5,10-methenyltetrahydrofolate + H2O = (6R)-10-formyltetrahydrofolate + H(+)</text>
        <dbReference type="Rhea" id="RHEA:23700"/>
        <dbReference type="ChEBI" id="CHEBI:15377"/>
        <dbReference type="ChEBI" id="CHEBI:15378"/>
        <dbReference type="ChEBI" id="CHEBI:57455"/>
        <dbReference type="ChEBI" id="CHEBI:195366"/>
        <dbReference type="EC" id="3.5.4.9"/>
    </reaction>
</comment>
<comment type="pathway">
    <text evidence="1">One-carbon metabolism; tetrahydrofolate interconversion.</text>
</comment>
<comment type="subunit">
    <text evidence="1">Homodimer.</text>
</comment>
<comment type="similarity">
    <text evidence="1">Belongs to the tetrahydrofolate dehydrogenase/cyclohydrolase family.</text>
</comment>
<proteinExistence type="inferred from homology"/>
<sequence length="291" mass="31729">MKSSILLDGKAISEKIRNRIQETLAKAKAEGKGIPTLATILVGNNPASETYVNMKVKACEKVGMHSRYIRLKEETTTEELLGEIRKLNLDPSINGILLQHPVPHQIDERKAFDEIALEKDVDGVTTISFGKLSMNSEAYYPCTPYGMVLLLQEYGIDVTGKHAVVVGRSPILGKPMAIMLTNLNATVTLCHSKTEDLPSLVKQADIIVGAVGKPEFIKAEWMKEGVVILDAGYNVGNVGDIEVSKAKDKSSYYTPVPGGVGPMTISVLLLQTMYSFLGQFSPKLESHVANR</sequence>
<protein>
    <recommendedName>
        <fullName evidence="1">Bifunctional protein FolD</fullName>
    </recommendedName>
    <domain>
        <recommendedName>
            <fullName evidence="1">Methylenetetrahydrofolate dehydrogenase</fullName>
            <ecNumber evidence="1">1.5.1.5</ecNumber>
        </recommendedName>
    </domain>
    <domain>
        <recommendedName>
            <fullName evidence="1">Methenyltetrahydrofolate cyclohydrolase</fullName>
            <ecNumber evidence="1">3.5.4.9</ecNumber>
        </recommendedName>
    </domain>
</protein>
<gene>
    <name evidence="1" type="primary">folD</name>
    <name type="ordered locus">LBF_1670</name>
</gene>
<reference key="1">
    <citation type="journal article" date="2008" name="PLoS ONE">
        <title>Genome sequence of the saprophyte Leptospira biflexa provides insights into the evolution of Leptospira and the pathogenesis of leptospirosis.</title>
        <authorList>
            <person name="Picardeau M."/>
            <person name="Bulach D.M."/>
            <person name="Bouchier C."/>
            <person name="Zuerner R.L."/>
            <person name="Zidane N."/>
            <person name="Wilson P.J."/>
            <person name="Creno S."/>
            <person name="Kuczek E.S."/>
            <person name="Bommezzadri S."/>
            <person name="Davis J.C."/>
            <person name="McGrath A."/>
            <person name="Johnson M.J."/>
            <person name="Boursaux-Eude C."/>
            <person name="Seemann T."/>
            <person name="Rouy Z."/>
            <person name="Coppel R.L."/>
            <person name="Rood J.I."/>
            <person name="Lajus A."/>
            <person name="Davies J.K."/>
            <person name="Medigue C."/>
            <person name="Adler B."/>
        </authorList>
    </citation>
    <scope>NUCLEOTIDE SEQUENCE [LARGE SCALE GENOMIC DNA]</scope>
    <source>
        <strain>Patoc 1 / Ames</strain>
    </source>
</reference>
<dbReference type="EC" id="1.5.1.5" evidence="1"/>
<dbReference type="EC" id="3.5.4.9" evidence="1"/>
<dbReference type="EMBL" id="CP000777">
    <property type="protein sequence ID" value="ABZ94177.1"/>
    <property type="molecule type" value="Genomic_DNA"/>
</dbReference>
<dbReference type="RefSeq" id="WP_012388707.1">
    <property type="nucleotide sequence ID" value="NC_010842.1"/>
</dbReference>
<dbReference type="SMR" id="B0S8U6"/>
<dbReference type="KEGG" id="lbf:LBF_1670"/>
<dbReference type="HOGENOM" id="CLU_034045_2_1_12"/>
<dbReference type="UniPathway" id="UPA00193"/>
<dbReference type="GO" id="GO:0005829">
    <property type="term" value="C:cytosol"/>
    <property type="evidence" value="ECO:0007669"/>
    <property type="project" value="TreeGrafter"/>
</dbReference>
<dbReference type="GO" id="GO:0004477">
    <property type="term" value="F:methenyltetrahydrofolate cyclohydrolase activity"/>
    <property type="evidence" value="ECO:0007669"/>
    <property type="project" value="UniProtKB-UniRule"/>
</dbReference>
<dbReference type="GO" id="GO:0004488">
    <property type="term" value="F:methylenetetrahydrofolate dehydrogenase (NADP+) activity"/>
    <property type="evidence" value="ECO:0007669"/>
    <property type="project" value="UniProtKB-UniRule"/>
</dbReference>
<dbReference type="GO" id="GO:0000105">
    <property type="term" value="P:L-histidine biosynthetic process"/>
    <property type="evidence" value="ECO:0007669"/>
    <property type="project" value="UniProtKB-KW"/>
</dbReference>
<dbReference type="GO" id="GO:0009086">
    <property type="term" value="P:methionine biosynthetic process"/>
    <property type="evidence" value="ECO:0007669"/>
    <property type="project" value="UniProtKB-KW"/>
</dbReference>
<dbReference type="GO" id="GO:0006164">
    <property type="term" value="P:purine nucleotide biosynthetic process"/>
    <property type="evidence" value="ECO:0007669"/>
    <property type="project" value="UniProtKB-KW"/>
</dbReference>
<dbReference type="GO" id="GO:0035999">
    <property type="term" value="P:tetrahydrofolate interconversion"/>
    <property type="evidence" value="ECO:0007669"/>
    <property type="project" value="UniProtKB-UniRule"/>
</dbReference>
<dbReference type="CDD" id="cd01080">
    <property type="entry name" value="NAD_bind_m-THF_DH_Cyclohyd"/>
    <property type="match status" value="1"/>
</dbReference>
<dbReference type="FunFam" id="3.40.50.720:FF:000094">
    <property type="entry name" value="Bifunctional protein FolD"/>
    <property type="match status" value="1"/>
</dbReference>
<dbReference type="FunFam" id="3.40.50.10860:FF:000005">
    <property type="entry name" value="C-1-tetrahydrofolate synthase, cytoplasmic, putative"/>
    <property type="match status" value="1"/>
</dbReference>
<dbReference type="Gene3D" id="3.40.50.10860">
    <property type="entry name" value="Leucine Dehydrogenase, chain A, domain 1"/>
    <property type="match status" value="1"/>
</dbReference>
<dbReference type="Gene3D" id="3.40.50.720">
    <property type="entry name" value="NAD(P)-binding Rossmann-like Domain"/>
    <property type="match status" value="1"/>
</dbReference>
<dbReference type="HAMAP" id="MF_01576">
    <property type="entry name" value="THF_DHG_CYH"/>
    <property type="match status" value="1"/>
</dbReference>
<dbReference type="InterPro" id="IPR046346">
    <property type="entry name" value="Aminoacid_DH-like_N_sf"/>
</dbReference>
<dbReference type="InterPro" id="IPR036291">
    <property type="entry name" value="NAD(P)-bd_dom_sf"/>
</dbReference>
<dbReference type="InterPro" id="IPR000672">
    <property type="entry name" value="THF_DH/CycHdrlase"/>
</dbReference>
<dbReference type="InterPro" id="IPR020630">
    <property type="entry name" value="THF_DH/CycHdrlase_cat_dom"/>
</dbReference>
<dbReference type="InterPro" id="IPR020867">
    <property type="entry name" value="THF_DH/CycHdrlase_CS"/>
</dbReference>
<dbReference type="InterPro" id="IPR020631">
    <property type="entry name" value="THF_DH/CycHdrlase_NAD-bd_dom"/>
</dbReference>
<dbReference type="NCBIfam" id="NF010774">
    <property type="entry name" value="PRK14177.1"/>
    <property type="match status" value="1"/>
</dbReference>
<dbReference type="PANTHER" id="PTHR48099:SF5">
    <property type="entry name" value="C-1-TETRAHYDROFOLATE SYNTHASE, CYTOPLASMIC"/>
    <property type="match status" value="1"/>
</dbReference>
<dbReference type="PANTHER" id="PTHR48099">
    <property type="entry name" value="C-1-TETRAHYDROFOLATE SYNTHASE, CYTOPLASMIC-RELATED"/>
    <property type="match status" value="1"/>
</dbReference>
<dbReference type="Pfam" id="PF00763">
    <property type="entry name" value="THF_DHG_CYH"/>
    <property type="match status" value="1"/>
</dbReference>
<dbReference type="Pfam" id="PF02882">
    <property type="entry name" value="THF_DHG_CYH_C"/>
    <property type="match status" value="1"/>
</dbReference>
<dbReference type="PRINTS" id="PR00085">
    <property type="entry name" value="THFDHDRGNASE"/>
</dbReference>
<dbReference type="SUPFAM" id="SSF53223">
    <property type="entry name" value="Aminoacid dehydrogenase-like, N-terminal domain"/>
    <property type="match status" value="1"/>
</dbReference>
<dbReference type="SUPFAM" id="SSF51735">
    <property type="entry name" value="NAD(P)-binding Rossmann-fold domains"/>
    <property type="match status" value="1"/>
</dbReference>
<dbReference type="PROSITE" id="PS00767">
    <property type="entry name" value="THF_DHG_CYH_2"/>
    <property type="match status" value="1"/>
</dbReference>
<accession>B0S8U6</accession>
<feature type="chain" id="PRO_0000340583" description="Bifunctional protein FolD">
    <location>
        <begin position="1"/>
        <end position="291"/>
    </location>
</feature>
<feature type="binding site" evidence="1">
    <location>
        <begin position="167"/>
        <end position="169"/>
    </location>
    <ligand>
        <name>NADP(+)</name>
        <dbReference type="ChEBI" id="CHEBI:58349"/>
    </ligand>
</feature>
<feature type="binding site" evidence="1">
    <location>
        <position position="192"/>
    </location>
    <ligand>
        <name>NADP(+)</name>
        <dbReference type="ChEBI" id="CHEBI:58349"/>
    </ligand>
</feature>
<evidence type="ECO:0000255" key="1">
    <source>
        <dbReference type="HAMAP-Rule" id="MF_01576"/>
    </source>
</evidence>
<keyword id="KW-0028">Amino-acid biosynthesis</keyword>
<keyword id="KW-0368">Histidine biosynthesis</keyword>
<keyword id="KW-0378">Hydrolase</keyword>
<keyword id="KW-0486">Methionine biosynthesis</keyword>
<keyword id="KW-0511">Multifunctional enzyme</keyword>
<keyword id="KW-0521">NADP</keyword>
<keyword id="KW-0554">One-carbon metabolism</keyword>
<keyword id="KW-0560">Oxidoreductase</keyword>
<keyword id="KW-0658">Purine biosynthesis</keyword>